<organism>
    <name type="scientific">Homo sapiens</name>
    <name type="common">Human</name>
    <dbReference type="NCBI Taxonomy" id="9606"/>
    <lineage>
        <taxon>Eukaryota</taxon>
        <taxon>Metazoa</taxon>
        <taxon>Chordata</taxon>
        <taxon>Craniata</taxon>
        <taxon>Vertebrata</taxon>
        <taxon>Euteleostomi</taxon>
        <taxon>Mammalia</taxon>
        <taxon>Eutheria</taxon>
        <taxon>Euarchontoglires</taxon>
        <taxon>Primates</taxon>
        <taxon>Haplorrhini</taxon>
        <taxon>Catarrhini</taxon>
        <taxon>Hominidae</taxon>
        <taxon>Homo</taxon>
    </lineage>
</organism>
<keyword id="KW-0025">Alternative splicing</keyword>
<keyword id="KW-1003">Cell membrane</keyword>
<keyword id="KW-0966">Cell projection</keyword>
<keyword id="KW-0963">Cytoplasm</keyword>
<keyword id="KW-0968">Cytoplasmic vesicle</keyword>
<keyword id="KW-0209">Deafness</keyword>
<keyword id="KW-0225">Disease variant</keyword>
<keyword id="KW-0887">Epilepsy</keyword>
<keyword id="KW-0343">GTPase activation</keyword>
<keyword id="KW-0991">Intellectual disability</keyword>
<keyword id="KW-0472">Membrane</keyword>
<keyword id="KW-1010">Non-syndromic deafness</keyword>
<keyword id="KW-0597">Phosphoprotein</keyword>
<keyword id="KW-1267">Proteomics identification</keyword>
<keyword id="KW-1185">Reference proteome</keyword>
<keyword id="KW-0770">Synapse</keyword>
<reference key="1">
    <citation type="journal article" date="1999" name="DNA Res.">
        <title>Characterization of cDNA clones selected by the GeneMark analysis from size-fractionated cDNA libraries from human brain.</title>
        <authorList>
            <person name="Hirosawa M."/>
            <person name="Nagase T."/>
            <person name="Ishikawa K."/>
            <person name="Kikuno R."/>
            <person name="Nomura N."/>
            <person name="Ohara O."/>
        </authorList>
    </citation>
    <scope>NUCLEOTIDE SEQUENCE [LARGE SCALE MRNA] (ISOFORM 1)</scope>
    <scope>VARIANT LEU-295</scope>
    <source>
        <tissue>Brain</tissue>
    </source>
</reference>
<reference key="2">
    <citation type="journal article" date="2002" name="DNA Res.">
        <title>Construction of expression-ready cDNA clones for KIAA genes: manual curation of 330 KIAA cDNA clones.</title>
        <authorList>
            <person name="Nakajima D."/>
            <person name="Okazaki N."/>
            <person name="Yamakawa H."/>
            <person name="Kikuno R."/>
            <person name="Ohara O."/>
            <person name="Nagase T."/>
        </authorList>
    </citation>
    <scope>SEQUENCE REVISION</scope>
</reference>
<reference key="3">
    <citation type="journal article" date="2009" name="Genes Cells">
        <title>Identification and characterization of a novel Tre-2/Bub2/Cdc16 (TBC) protein that possesses Rab3A-GAP activity.</title>
        <authorList>
            <person name="Ishibashi K."/>
            <person name="Kanno E."/>
            <person name="Itoh T."/>
            <person name="Fukuda M."/>
        </authorList>
    </citation>
    <scope>NUCLEOTIDE SEQUENCE [MRNA] (ISOFORM 1)</scope>
    <scope>VARIANT LEU-295</scope>
    <source>
        <tissue>Brain</tissue>
    </source>
</reference>
<reference key="4">
    <citation type="journal article" date="2004" name="Genome Res.">
        <title>The status, quality, and expansion of the NIH full-length cDNA project: the Mammalian Gene Collection (MGC).</title>
        <authorList>
            <consortium name="The MGC Project Team"/>
        </authorList>
    </citation>
    <scope>NUCLEOTIDE SEQUENCE [LARGE SCALE MRNA] (ISOFORMS 1 AND 2)</scope>
    <source>
        <tissue>Retinoblastoma</tissue>
    </source>
</reference>
<reference key="5">
    <citation type="journal article" date="2010" name="Am. J. Hum. Genet.">
        <title>TBC1D24, an ARF6-interacting protein, is mutated in familial infantile myoclonic epilepsy.</title>
        <authorList>
            <person name="Falace A."/>
            <person name="Filipello F."/>
            <person name="La Padula V."/>
            <person name="Vanni N."/>
            <person name="Madia F."/>
            <person name="De Pietri Tonelli D."/>
            <person name="de Falco F.A."/>
            <person name="Striano P."/>
            <person name="Dagna Bricarelli F."/>
            <person name="Minetti C."/>
            <person name="Benfenati F."/>
            <person name="Fassio A."/>
            <person name="Zara F."/>
        </authorList>
    </citation>
    <scope>FUNCTION</scope>
    <scope>TISSUE SPECIFICITY</scope>
    <scope>SUBCELLULAR LOCATION</scope>
    <scope>INTERACTION WITH ARF6</scope>
    <scope>VARIANTS FIME HIS-147 AND VAL-515</scope>
    <scope>CHARACTERIZATION OF VARIANTS FIME HIS-147 AND VAL-515</scope>
</reference>
<reference key="6">
    <citation type="journal article" date="2010" name="Am. J. Hum. Genet.">
        <title>A focal epilepsy and intellectual disability syndrome is due to a mutation in TBC1D24.</title>
        <authorList>
            <person name="Corbett M.A."/>
            <person name="Bahlo M."/>
            <person name="Jolly L."/>
            <person name="Afawi Z."/>
            <person name="Gardner A.E."/>
            <person name="Oliver K.L."/>
            <person name="Tan S."/>
            <person name="Coffey A."/>
            <person name="Mulley J.C."/>
            <person name="Dibbens L.M."/>
            <person name="Simri W."/>
            <person name="Shalata A."/>
            <person name="Kivity S."/>
            <person name="Jackson G.D."/>
            <person name="Berkovic S.F."/>
            <person name="Gecz J."/>
        </authorList>
    </citation>
    <scope>FUNCTION</scope>
    <scope>VARIANT FIME LEU-251</scope>
    <scope>CHARACTERIZATION OF VARIANT FIME LEU-251</scope>
</reference>
<reference key="7">
    <citation type="journal article" date="2013" name="J. Proteome Res.">
        <title>Toward a comprehensive characterization of a human cancer cell phosphoproteome.</title>
        <authorList>
            <person name="Zhou H."/>
            <person name="Di Palma S."/>
            <person name="Preisinger C."/>
            <person name="Peng M."/>
            <person name="Polat A.N."/>
            <person name="Heck A.J."/>
            <person name="Mohammed S."/>
        </authorList>
    </citation>
    <scope>PHOSPHORYLATION [LARGE SCALE ANALYSIS] AT SER-480</scope>
    <scope>IDENTIFICATION BY MASS SPECTROMETRY [LARGE SCALE ANALYSIS]</scope>
    <source>
        <tissue>Erythroleukemia</tissue>
    </source>
</reference>
<reference key="8">
    <citation type="journal article" date="2014" name="J. Proteomics">
        <title>An enzyme assisted RP-RPLC approach for in-depth analysis of human liver phosphoproteome.</title>
        <authorList>
            <person name="Bian Y."/>
            <person name="Song C."/>
            <person name="Cheng K."/>
            <person name="Dong M."/>
            <person name="Wang F."/>
            <person name="Huang J."/>
            <person name="Sun D."/>
            <person name="Wang L."/>
            <person name="Ye M."/>
            <person name="Zou H."/>
        </authorList>
    </citation>
    <scope>PHOSPHORYLATION [LARGE SCALE ANALYSIS] AT SER-473 AND SER-480</scope>
    <scope>IDENTIFICATION BY MASS SPECTROMETRY [LARGE SCALE ANALYSIS]</scope>
    <source>
        <tissue>Liver</tissue>
    </source>
</reference>
<reference key="9">
    <citation type="journal article" date="2013" name="Hum. Mutat.">
        <title>Novel compound heterozygous mutations in TBC1D24 cause familial malignant migrating partial seizures of infancy.</title>
        <authorList>
            <person name="Milh M."/>
            <person name="Falace A."/>
            <person name="Villeneuve N."/>
            <person name="Vanni N."/>
            <person name="Cacciagli P."/>
            <person name="Assereto S."/>
            <person name="Nabbout R."/>
            <person name="Benfenati F."/>
            <person name="Zara F."/>
            <person name="Chabrol B."/>
            <person name="Villard L."/>
            <person name="Fassio A."/>
        </authorList>
    </citation>
    <scope>VARIANT DEE16 SER-229</scope>
    <scope>CHARACTERIZATION OF VARIANT DEE16 SER-229</scope>
</reference>
<reference key="10">
    <citation type="journal article" date="2014" name="Am. J. Hum. Genet.">
        <title>Mutations in TBC1D24, a gene associated with epilepsy, also cause nonsyndromic deafness DFNB86.</title>
        <authorList>
            <consortium name="University of Washington Center for Mendelian Genomics"/>
            <person name="Rehman A.U."/>
            <person name="Santos-Cortez R.L."/>
            <person name="Morell R.J."/>
            <person name="Drummond M.C."/>
            <person name="Ito T."/>
            <person name="Lee K."/>
            <person name="Khan A.A."/>
            <person name="Basra M.A."/>
            <person name="Wasif N."/>
            <person name="Ayub M."/>
            <person name="Ali R.A."/>
            <person name="Raza S.I."/>
            <person name="Nickerson D.A."/>
            <person name="Shendure J."/>
            <person name="Bamshad M."/>
            <person name="Riazuddin S."/>
            <person name="Billington N."/>
            <person name="Khan S.N."/>
            <person name="Friedman P.L."/>
            <person name="Griffith A.J."/>
            <person name="Ahmad W."/>
            <person name="Riazuddin S."/>
            <person name="Leal S.M."/>
            <person name="Friedman T.B."/>
        </authorList>
    </citation>
    <scope>VARIANTS DFNB86 TYR-70 AND PRO-293</scope>
</reference>
<reference key="11">
    <citation type="journal article" date="2014" name="Hum. Mutat.">
        <title>A dominant mutation in the stereocilia-expressing gene TBC1D24 is a probable cause for nonsyndromic hearing impairment.</title>
        <authorList>
            <person name="Zhang L."/>
            <person name="Hu L."/>
            <person name="Chai Y."/>
            <person name="Pang X."/>
            <person name="Yang T."/>
            <person name="Wu H."/>
        </authorList>
    </citation>
    <scope>INVOLVEMENT IN DFNA65</scope>
    <scope>VARIANT DFNA65 LEU-178</scope>
</reference>
<reference key="12">
    <citation type="journal article" date="2014" name="Hum. Mutat.">
        <title>TBC1D24 mutation causes autosomal-dominant nonsyndromic hearing loss.</title>
        <authorList>
            <person name="Azaiez H."/>
            <person name="Booth K.T."/>
            <person name="Bu F."/>
            <person name="Huygen P."/>
            <person name="Shibata S.B."/>
            <person name="Shearer A.E."/>
            <person name="Kolbe D."/>
            <person name="Meyer N."/>
            <person name="Black-Ziegelbein E.A."/>
            <person name="Smith R.J."/>
        </authorList>
    </citation>
    <scope>VARIANT DFNA65 LEU-178</scope>
</reference>
<reference key="13">
    <citation type="journal article" date="2014" name="Lancet Neurol.">
        <title>The genetic basis of DOORS syndrome: an exome-sequencing study.</title>
        <authorList>
            <person name="Campeau P.M."/>
            <person name="Kasperaviciute D."/>
            <person name="Lu J.T."/>
            <person name="Burrage L.C."/>
            <person name="Kim C."/>
            <person name="Hori M."/>
            <person name="Powell B.R."/>
            <person name="Stewart F."/>
            <person name="Felix T.M."/>
            <person name="van den Ende J."/>
            <person name="Wisniewska M."/>
            <person name="Kayserili H."/>
            <person name="Rump P."/>
            <person name="Nampoothiri S."/>
            <person name="Aftimos S."/>
            <person name="Mey A."/>
            <person name="Nair L.D."/>
            <person name="Begleiter M.L."/>
            <person name="De Bie I."/>
            <person name="Meenakshi G."/>
            <person name="Murray M.L."/>
            <person name="Repetto G.M."/>
            <person name="Golabi M."/>
            <person name="Blair E."/>
            <person name="Male A."/>
            <person name="Giuliano F."/>
            <person name="Kariminejad A."/>
            <person name="Newman W.G."/>
            <person name="Bhaskar S.S."/>
            <person name="Dickerson J.E."/>
            <person name="Kerr B."/>
            <person name="Banka S."/>
            <person name="Giltay J.C."/>
            <person name="Wieczorek D."/>
            <person name="Tostevin A."/>
            <person name="Wiszniewska J."/>
            <person name="Cheung S.W."/>
            <person name="Hennekam R.C."/>
            <person name="Gibbs R.A."/>
            <person name="Lee B.H."/>
            <person name="Sisodiya S.M."/>
        </authorList>
    </citation>
    <scope>VARIANTS DOORS GLU-20; CYS-40; SER-110; CYS-242 AND PHE-333</scope>
</reference>
<reference key="14">
    <citation type="journal article" date="2016" name="Am. J. Med. Genet. A">
        <title>Clinical intrafamilial variability in lethal familial neonatal seizure disorder caused by TBC1D24 mutations.</title>
        <authorList>
            <person name="Lozano R."/>
            <person name="Herman K."/>
            <person name="Rothfuss M."/>
            <person name="Rieger H."/>
            <person name="Bayrak-Toydemir P."/>
            <person name="Aprile D."/>
            <person name="Fruscione F."/>
            <person name="Zara F."/>
            <person name="Fassio A."/>
        </authorList>
    </citation>
    <scope>VARIANTS DEE16 ASP-113 AND PRO-159</scope>
</reference>
<reference key="15">
    <citation type="journal article" date="2019" name="Brain">
        <title>TBC1D24-TLDc-related epilepsy exercise-induced dystonia: rescue by antioxidants in a disease model.</title>
        <authorList>
            <person name="Luethy K."/>
            <person name="Mei D."/>
            <person name="Fischer B."/>
            <person name="De Fusco M."/>
            <person name="Swerts J."/>
            <person name="Paesmans J."/>
            <person name="Parrini E."/>
            <person name="Lubarr N."/>
            <person name="Meijer I.A."/>
            <person name="Mackenzie K.M."/>
            <person name="Lee W.T."/>
            <person name="Cittaro D."/>
            <person name="Aridon P."/>
            <person name="Schoovaerts N."/>
            <person name="Versees W."/>
            <person name="Verstreken P."/>
            <person name="Casari G."/>
            <person name="Guerrini R."/>
        </authorList>
    </citation>
    <scope>VARIANTS EPRPDC 81-ILE--LYS-84 DEL; MET-182; HIS-360; VAL-500; ARG-501 AND ARG-511</scope>
    <scope>INVOLVEMENT IN EPRPDC</scope>
    <scope>FUNCTION</scope>
    <scope>SUBCELLULAR LOCATION</scope>
    <scope>CHARACTERIZATION OF VARIANT EPRPDC ARG-501</scope>
</reference>
<reference key="16">
    <citation type="journal article" date="2024" name="Sci. Rep.">
        <title>Investigation of a novel TBC1D24 variation causing autosomal dominant non-syndromic hearing loss.</title>
        <authorList>
            <person name="Lei P."/>
            <person name="Zhu Q."/>
            <person name="Dong W."/>
        </authorList>
    </citation>
    <scope>VARIANT DFNA65 TYR-487</scope>
</reference>
<name>TBC24_HUMAN</name>
<dbReference type="EMBL" id="AB032997">
    <property type="protein sequence ID" value="BAA86485.1"/>
    <property type="status" value="ALT_INIT"/>
    <property type="molecule type" value="mRNA"/>
</dbReference>
<dbReference type="EMBL" id="AB449911">
    <property type="protein sequence ID" value="BAH16654.1"/>
    <property type="molecule type" value="mRNA"/>
</dbReference>
<dbReference type="EMBL" id="BC112389">
    <property type="protein sequence ID" value="AAI12390.1"/>
    <property type="molecule type" value="mRNA"/>
</dbReference>
<dbReference type="EMBL" id="BC127014">
    <property type="protein sequence ID" value="AAI27015.1"/>
    <property type="molecule type" value="mRNA"/>
</dbReference>
<dbReference type="EMBL" id="BC127015">
    <property type="protein sequence ID" value="AAI27016.1"/>
    <property type="molecule type" value="mRNA"/>
</dbReference>
<dbReference type="CCDS" id="CCDS42107.1">
    <molecule id="Q9ULP9-2"/>
</dbReference>
<dbReference type="CCDS" id="CCDS55980.1">
    <molecule id="Q9ULP9-1"/>
</dbReference>
<dbReference type="RefSeq" id="NP_001186036.1">
    <molecule id="Q9ULP9-1"/>
    <property type="nucleotide sequence ID" value="NM_001199107.2"/>
</dbReference>
<dbReference type="RefSeq" id="NP_065756.1">
    <molecule id="Q9ULP9-2"/>
    <property type="nucleotide sequence ID" value="NM_020705.3"/>
</dbReference>
<dbReference type="RefSeq" id="XP_016878982.1">
    <molecule id="Q9ULP9-1"/>
    <property type="nucleotide sequence ID" value="XM_017023493.2"/>
</dbReference>
<dbReference type="RefSeq" id="XP_016878983.1">
    <molecule id="Q9ULP9-2"/>
    <property type="nucleotide sequence ID" value="XM_017023494.2"/>
</dbReference>
<dbReference type="RefSeq" id="XP_016878984.1">
    <molecule id="Q9ULP9-2"/>
    <property type="nucleotide sequence ID" value="XM_017023495.2"/>
</dbReference>
<dbReference type="RefSeq" id="XP_047290344.1">
    <molecule id="Q9ULP9-1"/>
    <property type="nucleotide sequence ID" value="XM_047434388.1"/>
</dbReference>
<dbReference type="RefSeq" id="XP_054169503.1">
    <molecule id="Q9ULP9-1"/>
    <property type="nucleotide sequence ID" value="XM_054313528.1"/>
</dbReference>
<dbReference type="RefSeq" id="XP_054169504.1">
    <molecule id="Q9ULP9-2"/>
    <property type="nucleotide sequence ID" value="XM_054313529.1"/>
</dbReference>
<dbReference type="SMR" id="Q9ULP9"/>
<dbReference type="BioGRID" id="121535">
    <property type="interactions" value="54"/>
</dbReference>
<dbReference type="FunCoup" id="Q9ULP9">
    <property type="interactions" value="385"/>
</dbReference>
<dbReference type="IntAct" id="Q9ULP9">
    <property type="interactions" value="28"/>
</dbReference>
<dbReference type="STRING" id="9606.ENSP00000494678"/>
<dbReference type="GlyGen" id="Q9ULP9">
    <property type="glycosylation" value="1 site"/>
</dbReference>
<dbReference type="iPTMnet" id="Q9ULP9"/>
<dbReference type="MetOSite" id="Q9ULP9"/>
<dbReference type="PhosphoSitePlus" id="Q9ULP9"/>
<dbReference type="BioMuta" id="TBC1D24"/>
<dbReference type="DMDM" id="148887040"/>
<dbReference type="jPOST" id="Q9ULP9"/>
<dbReference type="MassIVE" id="Q9ULP9"/>
<dbReference type="PaxDb" id="9606-ENSP00000293970"/>
<dbReference type="PeptideAtlas" id="Q9ULP9"/>
<dbReference type="ProteomicsDB" id="85090">
    <molecule id="Q9ULP9-1"/>
</dbReference>
<dbReference type="ProteomicsDB" id="85091">
    <molecule id="Q9ULP9-2"/>
</dbReference>
<dbReference type="Pumba" id="Q9ULP9"/>
<dbReference type="Antibodypedia" id="42567">
    <property type="antibodies" value="60 antibodies from 18 providers"/>
</dbReference>
<dbReference type="DNASU" id="57465"/>
<dbReference type="Ensembl" id="ENST00000567020.7">
    <molecule id="Q9ULP9-2"/>
    <property type="protein sequence ID" value="ENSP00000454408.1"/>
    <property type="gene ID" value="ENSG00000162065.15"/>
</dbReference>
<dbReference type="Ensembl" id="ENST00000569874.2">
    <molecule id="Q9ULP9-2"/>
    <property type="protein sequence ID" value="ENSP00000455005.2"/>
    <property type="gene ID" value="ENSG00000162065.15"/>
</dbReference>
<dbReference type="Ensembl" id="ENST00000627285.1">
    <molecule id="Q9ULP9-2"/>
    <property type="protein sequence ID" value="ENSP00000486121.1"/>
    <property type="gene ID" value="ENSG00000162065.15"/>
</dbReference>
<dbReference type="Ensembl" id="ENST00000646147.1">
    <molecule id="Q9ULP9-1"/>
    <property type="protein sequence ID" value="ENSP00000494678.1"/>
    <property type="gene ID" value="ENSG00000162065.15"/>
</dbReference>
<dbReference type="GeneID" id="57465"/>
<dbReference type="KEGG" id="hsa:57465"/>
<dbReference type="MANE-Select" id="ENST00000646147.1">
    <property type="protein sequence ID" value="ENSP00000494678.1"/>
    <property type="RefSeq nucleotide sequence ID" value="NM_001199107.2"/>
    <property type="RefSeq protein sequence ID" value="NP_001186036.1"/>
</dbReference>
<dbReference type="UCSC" id="uc002cqk.4">
    <molecule id="Q9ULP9-1"/>
    <property type="organism name" value="human"/>
</dbReference>
<dbReference type="AGR" id="HGNC:29203"/>
<dbReference type="CTD" id="57465"/>
<dbReference type="DisGeNET" id="57465"/>
<dbReference type="GeneCards" id="TBC1D24"/>
<dbReference type="GeneReviews" id="TBC1D24"/>
<dbReference type="HGNC" id="HGNC:29203">
    <property type="gene designation" value="TBC1D24"/>
</dbReference>
<dbReference type="HPA" id="ENSG00000162065">
    <property type="expression patterns" value="Tissue enhanced (salivary)"/>
</dbReference>
<dbReference type="MalaCards" id="TBC1D24"/>
<dbReference type="MIM" id="220500">
    <property type="type" value="phenotype"/>
</dbReference>
<dbReference type="MIM" id="605021">
    <property type="type" value="phenotype"/>
</dbReference>
<dbReference type="MIM" id="608105">
    <property type="type" value="phenotype"/>
</dbReference>
<dbReference type="MIM" id="613577">
    <property type="type" value="gene"/>
</dbReference>
<dbReference type="MIM" id="614617">
    <property type="type" value="phenotype"/>
</dbReference>
<dbReference type="MIM" id="615338">
    <property type="type" value="phenotype"/>
</dbReference>
<dbReference type="MIM" id="616044">
    <property type="type" value="phenotype"/>
</dbReference>
<dbReference type="neXtProt" id="NX_Q9ULP9"/>
<dbReference type="OpenTargets" id="ENSG00000162065"/>
<dbReference type="Orphanet" id="79500">
    <property type="disease" value="DOORS syndrome"/>
</dbReference>
<dbReference type="Orphanet" id="293181">
    <property type="disease" value="Epilepsy of infancy with migrating focal seizures"/>
</dbReference>
<dbReference type="Orphanet" id="352582">
    <property type="disease" value="Familial infantile myoclonic epilepsy"/>
</dbReference>
<dbReference type="Orphanet" id="352587">
    <property type="disease" value="Focal epilepsy-intellectual disability-cerebro-cerebellar malformation"/>
</dbReference>
<dbReference type="Orphanet" id="352596">
    <property type="disease" value="Progressive myoclonic epilepsy with dystonia"/>
</dbReference>
<dbReference type="Orphanet" id="90635">
    <property type="disease" value="Rare autosomal dominant non-syndromic sensorineural deafness type DFNA"/>
</dbReference>
<dbReference type="Orphanet" id="90636">
    <property type="disease" value="Rare autosomal recessive non-syndromic sensorineural deafness type DFNB"/>
</dbReference>
<dbReference type="Orphanet" id="163727">
    <property type="disease" value="Rolandic epilepsy-paroxysmal exercise-induced dystonia-writer's cramp syndrome"/>
</dbReference>
<dbReference type="PharmGKB" id="PA144596267"/>
<dbReference type="VEuPathDB" id="HostDB:ENSG00000162065"/>
<dbReference type="eggNOG" id="KOG2801">
    <property type="taxonomic scope" value="Eukaryota"/>
</dbReference>
<dbReference type="GeneTree" id="ENSGT00410000025739"/>
<dbReference type="HOGENOM" id="CLU_018035_1_1_1"/>
<dbReference type="InParanoid" id="Q9ULP9"/>
<dbReference type="OMA" id="WGRTEHC"/>
<dbReference type="OrthoDB" id="10065050at2759"/>
<dbReference type="PAN-GO" id="Q9ULP9">
    <property type="GO annotations" value="3 GO annotations based on evolutionary models"/>
</dbReference>
<dbReference type="PhylomeDB" id="Q9ULP9"/>
<dbReference type="TreeFam" id="TF315420"/>
<dbReference type="PathwayCommons" id="Q9ULP9"/>
<dbReference type="Reactome" id="R-HSA-8854214">
    <property type="pathway name" value="TBC/RABGAPs"/>
</dbReference>
<dbReference type="SignaLink" id="Q9ULP9"/>
<dbReference type="BioGRID-ORCS" id="57465">
    <property type="hits" value="22 hits in 1154 CRISPR screens"/>
</dbReference>
<dbReference type="CD-CODE" id="FB4E32DD">
    <property type="entry name" value="Presynaptic clusters and postsynaptic densities"/>
</dbReference>
<dbReference type="GenomeRNAi" id="57465"/>
<dbReference type="Pharos" id="Q9ULP9">
    <property type="development level" value="Tbio"/>
</dbReference>
<dbReference type="PRO" id="PR:Q9ULP9"/>
<dbReference type="Proteomes" id="UP000005640">
    <property type="component" value="Chromosome 16"/>
</dbReference>
<dbReference type="RNAct" id="Q9ULP9">
    <property type="molecule type" value="protein"/>
</dbReference>
<dbReference type="Bgee" id="ENSG00000162065">
    <property type="expression patterns" value="Expressed in parotid gland and 168 other cell types or tissues"/>
</dbReference>
<dbReference type="ExpressionAtlas" id="Q9ULP9">
    <property type="expression patterns" value="baseline and differential"/>
</dbReference>
<dbReference type="GO" id="GO:0030054">
    <property type="term" value="C:cell junction"/>
    <property type="evidence" value="ECO:0000314"/>
    <property type="project" value="HPA"/>
</dbReference>
<dbReference type="GO" id="GO:0005737">
    <property type="term" value="C:cytoplasm"/>
    <property type="evidence" value="ECO:0000314"/>
    <property type="project" value="UniProtKB"/>
</dbReference>
<dbReference type="GO" id="GO:0030659">
    <property type="term" value="C:cytoplasmic vesicle membrane"/>
    <property type="evidence" value="ECO:0007669"/>
    <property type="project" value="UniProtKB-SubCell"/>
</dbReference>
<dbReference type="GO" id="GO:0031594">
    <property type="term" value="C:neuromuscular junction"/>
    <property type="evidence" value="ECO:0000250"/>
    <property type="project" value="ParkinsonsUK-UCL"/>
</dbReference>
<dbReference type="GO" id="GO:0005886">
    <property type="term" value="C:plasma membrane"/>
    <property type="evidence" value="ECO:0000314"/>
    <property type="project" value="HPA"/>
</dbReference>
<dbReference type="GO" id="GO:0043195">
    <property type="term" value="C:terminal bouton"/>
    <property type="evidence" value="ECO:0000250"/>
    <property type="project" value="ParkinsonsUK-UCL"/>
</dbReference>
<dbReference type="GO" id="GO:0005096">
    <property type="term" value="F:GTPase activator activity"/>
    <property type="evidence" value="ECO:0007669"/>
    <property type="project" value="UniProtKB-KW"/>
</dbReference>
<dbReference type="GO" id="GO:0061564">
    <property type="term" value="P:axon development"/>
    <property type="evidence" value="ECO:0007669"/>
    <property type="project" value="Ensembl"/>
</dbReference>
<dbReference type="GO" id="GO:0034599">
    <property type="term" value="P:cellular response to oxidative stress"/>
    <property type="evidence" value="ECO:0000314"/>
    <property type="project" value="MGI"/>
</dbReference>
<dbReference type="GO" id="GO:0016358">
    <property type="term" value="P:dendrite development"/>
    <property type="evidence" value="ECO:0007669"/>
    <property type="project" value="Ensembl"/>
</dbReference>
<dbReference type="GO" id="GO:1900408">
    <property type="term" value="P:negative regulation of cellular response to oxidative stress"/>
    <property type="evidence" value="ECO:0007669"/>
    <property type="project" value="Ensembl"/>
</dbReference>
<dbReference type="GO" id="GO:0031175">
    <property type="term" value="P:neuron projection development"/>
    <property type="evidence" value="ECO:0000314"/>
    <property type="project" value="MGI"/>
</dbReference>
<dbReference type="GO" id="GO:0050775">
    <property type="term" value="P:positive regulation of dendrite morphogenesis"/>
    <property type="evidence" value="ECO:0007669"/>
    <property type="project" value="Ensembl"/>
</dbReference>
<dbReference type="GO" id="GO:2000463">
    <property type="term" value="P:positive regulation of excitatory postsynaptic potential"/>
    <property type="evidence" value="ECO:0007669"/>
    <property type="project" value="Ensembl"/>
</dbReference>
<dbReference type="GO" id="GO:2001224">
    <property type="term" value="P:positive regulation of neuron migration"/>
    <property type="evidence" value="ECO:0007669"/>
    <property type="project" value="Ensembl"/>
</dbReference>
<dbReference type="GO" id="GO:0048488">
    <property type="term" value="P:synaptic vesicle endocytosis"/>
    <property type="evidence" value="ECO:0007669"/>
    <property type="project" value="Ensembl"/>
</dbReference>
<dbReference type="FunFam" id="1.10.472.80:FF:000032">
    <property type="entry name" value="TBC1 domain family member 24 isoform X1"/>
    <property type="match status" value="1"/>
</dbReference>
<dbReference type="Gene3D" id="1.10.472.80">
    <property type="entry name" value="Ypt/Rab-GAP domain of gyp1p, domain 3"/>
    <property type="match status" value="1"/>
</dbReference>
<dbReference type="InterPro" id="IPR000195">
    <property type="entry name" value="Rab-GAP-TBC_dom"/>
</dbReference>
<dbReference type="InterPro" id="IPR035969">
    <property type="entry name" value="Rab-GAP_TBC_sf"/>
</dbReference>
<dbReference type="InterPro" id="IPR006571">
    <property type="entry name" value="TLDc_dom"/>
</dbReference>
<dbReference type="PANTHER" id="PTHR23354:SF122">
    <property type="entry name" value="GTPASE-ACTIVATING PROTEIN SKYWALKER"/>
    <property type="match status" value="1"/>
</dbReference>
<dbReference type="PANTHER" id="PTHR23354">
    <property type="entry name" value="NUCLEOLAR PROTEIN 7/ESTROGEN RECEPTOR COACTIVATOR-RELATED"/>
    <property type="match status" value="1"/>
</dbReference>
<dbReference type="Pfam" id="PF00566">
    <property type="entry name" value="RabGAP-TBC"/>
    <property type="match status" value="1"/>
</dbReference>
<dbReference type="Pfam" id="PF07534">
    <property type="entry name" value="TLD"/>
    <property type="match status" value="2"/>
</dbReference>
<dbReference type="SMART" id="SM00164">
    <property type="entry name" value="TBC"/>
    <property type="match status" value="1"/>
</dbReference>
<dbReference type="SMART" id="SM00584">
    <property type="entry name" value="TLDc"/>
    <property type="match status" value="1"/>
</dbReference>
<dbReference type="SUPFAM" id="SSF47923">
    <property type="entry name" value="Ypt/Rab-GAP domain of gyp1p"/>
    <property type="match status" value="2"/>
</dbReference>
<dbReference type="PROSITE" id="PS51886">
    <property type="entry name" value="TLDC"/>
    <property type="match status" value="1"/>
</dbReference>
<protein>
    <recommendedName>
        <fullName>TBC1 domain family member 24</fullName>
    </recommendedName>
</protein>
<comment type="function">
    <text evidence="5 6 13">May act as a GTPase-activating protein for Rab family protein(s) (PubMed:20727515, PubMed:20797691). Involved in neuronal projections development, probably through a negative modulation of ARF6 function (PubMed:20727515). Involved in the regulation of synaptic vesicle trafficking (PubMed:31257402).</text>
</comment>
<comment type="subunit">
    <text evidence="5">Interacts with ARF6.</text>
</comment>
<comment type="interaction">
    <interactant intactId="EBI-10968870">
        <id>Q9ULP9-2</id>
    </interactant>
    <interactant intactId="EBI-638181">
        <id>P62330</id>
        <label>ARF6</label>
    </interactant>
    <organismsDiffer>false</organismsDiffer>
    <experiments>2</experiments>
</comment>
<comment type="subcellular location">
    <subcellularLocation>
        <location evidence="5">Cell membrane</location>
        <topology evidence="16">Peripheral membrane protein</topology>
    </subcellularLocation>
    <subcellularLocation>
        <location evidence="5">Cytoplasm</location>
    </subcellularLocation>
    <subcellularLocation>
        <location evidence="1">Cytoplasmic vesicle membrane</location>
    </subcellularLocation>
    <subcellularLocation>
        <location evidence="13">Presynapse</location>
    </subcellularLocation>
    <text evidence="1 5">Mainly cytoplasmic with partial expression at the plasma membrane (PubMed:20727515). Associates with certain types of membrane phosphoinositides, preferentially those phosphorylated at the D5 position of the inositol ring such as phosphatidylinositol 4,5-bisphosphate (PIP2) and phosphatidylinositol 3,4,5-trisphosphate (PIP3) (By similarity).</text>
</comment>
<comment type="alternative products">
    <event type="alternative splicing"/>
    <isoform>
        <id>Q9ULP9-1</id>
        <name>1</name>
        <sequence type="displayed"/>
    </isoform>
    <isoform>
        <id>Q9ULP9-2</id>
        <name>2</name>
        <sequence type="described" ref="VSP_025701"/>
    </isoform>
</comment>
<comment type="tissue specificity">
    <text evidence="5">Highest expression in brain.</text>
</comment>
<comment type="domain">
    <text evidence="1">The Rab-GAP TBC domain is essential for phosphatidylinositol binding.</text>
</comment>
<comment type="disease" evidence="5 6">
    <disease id="DI-02926">
        <name>Familial infantile myoclonic epilepsy</name>
        <acronym>FIME</acronym>
        <description>A subtype of idiopathic epilepsy starting in early infancy and manifesting as myoclonic seizures, febrile convulsions, and tonic-clonic seizures.</description>
        <dbReference type="MIM" id="605021"/>
    </disease>
    <text>The disease is caused by variants affecting the gene represented in this entry.</text>
</comment>
<comment type="disease" evidence="7 12">
    <disease id="DI-03823">
        <name>Developmental and epileptic encephalopathy 16</name>
        <acronym>DEE16</acronym>
        <description>A severe autosomal recessive neurologic disorder characterized by onset of seizures in the first weeks or months of life. Seizures can be of various types, are unresponsive to medication, last for long periods of time, and occur frequently. Affected infants show psychomotor regression or lack of psychomotor development, as well as other neurologic features such as extrapyramidal signs and hypotonia. Most die in childhood.</description>
        <dbReference type="MIM" id="615338"/>
    </disease>
    <text>The disease is caused by variants affecting the gene represented in this entry.</text>
</comment>
<comment type="disease" evidence="10 11 14">
    <disease id="DI-04244">
        <name>Deafness, autosomal dominant, 65</name>
        <acronym>DFNA65</acronym>
        <description>A form of non-syndromic sensorineural hearing loss. Sensorineural deafness results from damage to the neural receptors of the inner ear, the nerve pathways to the brain, or the area of the brain that receives sound information. DFNA65 is characterized by postlingual onset of slowly progressive hearing loss in the third decade. Initially affecting the high frequencies, the hearing loss eventually affects all frequencies and results in severe to profound deafness in the seventh decade. Vestibular function is normal.</description>
        <dbReference type="MIM" id="616044"/>
    </disease>
    <text>The disease is caused by variants affecting the gene represented in this entry.</text>
</comment>
<comment type="disease" evidence="8">
    <disease id="DI-03992">
        <name>Deafness, onychodystrophy, osteodystrophy, impaired intellectual development, and seizures syndrome</name>
        <acronym>DOORS</acronym>
        <description>A syndrome characterized by sensorineural deafness, intellectual disability, hypoplastic or absent nails, small or absent distal phalanges of hands and feet. Additional features include coarse facies, a large nose with wide nasal bridge, bulbous tip and anteverted nares, a long prominent philtrum and downturned corners of the mouth. Progressive neurological manifestations include seizures from infancy, optic atrophy, and peripheral polyneuropathy.</description>
        <dbReference type="MIM" id="220500"/>
    </disease>
    <text>The disease is caused by variants affecting the gene represented in this entry.</text>
</comment>
<comment type="disease" evidence="9">
    <disease id="DI-04026">
        <name>Deafness, autosomal recessive, 86</name>
        <acronym>DFNB86</acronym>
        <description>A form of non-syndromic deafness characterized by prelingual onset of profound sensorineural hearing loss affecting all frequencies.</description>
        <dbReference type="MIM" id="614617"/>
    </disease>
    <text>The disease is caused by variants affecting the gene represented in this entry.</text>
</comment>
<comment type="disease" evidence="13">
    <disease id="DI-05646">
        <name>Epilepsy, rolandic, with proxysmal exercise-induce dystonia and writer's cramp</name>
        <acronym>EPRPDC</acronym>
        <description>An autosomal recessive neurologic disorder characterized by onset of focal seizures in infancy and exercise-induced dystonia in childhood. Clinical features include involuntary movements and difficulties with fine motor skills of the hand.</description>
        <dbReference type="MIM" id="608105"/>
    </disease>
    <text>The disease is caused by variants affecting the gene represented in this entry.</text>
</comment>
<comment type="sequence caution" evidence="16">
    <conflict type="erroneous initiation">
        <sequence resource="EMBL-CDS" id="BAA86485"/>
    </conflict>
    <text>Extended N-terminus.</text>
</comment>
<sequence length="559" mass="62919">MDSPGYNCFVDKDKMDAAIQDLGPKELSCTELQELKQLARQGYWAQSHALRGKVYQRLIRDIPCRTVTPDASVYSDIVGKIVGKHSSSCLPLPEFVDNTQVPSYCLNARGEGAVRKILLCLANQFPDISFCPALPAVVALLLHYSIDEAECFEKACRILACNDPGRRLIDQSFLAFESSCMTFGDLVNKYCQAAHKLMVAVSEDVLQVYADWQRWLFGELPLCYFARVFDVFLVEGYKVLYRVALAILKFFHKVRAGQPLESDSVKQDIRTFVRDIAKTVSPEKLLEKAFAIRLFSRKEIQLLQMANEKALKQKGITVKQKSVSLSKRQFVHLAVHAENFRSEIVSVREMRDIWSWVPERFALCQPLLLFSSLQHGYSLARFYFQCEGHEPTLLLIKTTQKEVCGAYLSTDWSERNKFGGKLGFFGTGECFVFRLQPEVQRYEWVVIKHPELTKPPPLMAAEPTAPLSHSASSDPADRLSPFLAARHFNLPSKTESMFMAGGSDCLIVGGGGGQALYIDGDLNRGRTSHCDTFNNQPLCSENFLIAAVEAWGFQDPDTQ</sequence>
<gene>
    <name type="primary">TBC1D24</name>
    <name type="synonym">KIAA1171</name>
</gene>
<accession>Q9ULP9</accession>
<accession>A0JNW3</accession>
<accession>B9A6M6</accession>
<accession>Q2KJ08</accession>
<proteinExistence type="evidence at protein level"/>
<evidence type="ECO:0000250" key="1">
    <source>
        <dbReference type="UniProtKB" id="Q9VIH7"/>
    </source>
</evidence>
<evidence type="ECO:0000255" key="2">
    <source>
        <dbReference type="PROSITE-ProRule" id="PRU01234"/>
    </source>
</evidence>
<evidence type="ECO:0000269" key="3">
    <source>
    </source>
</evidence>
<evidence type="ECO:0000269" key="4">
    <source>
    </source>
</evidence>
<evidence type="ECO:0000269" key="5">
    <source>
    </source>
</evidence>
<evidence type="ECO:0000269" key="6">
    <source>
    </source>
</evidence>
<evidence type="ECO:0000269" key="7">
    <source>
    </source>
</evidence>
<evidence type="ECO:0000269" key="8">
    <source>
    </source>
</evidence>
<evidence type="ECO:0000269" key="9">
    <source>
    </source>
</evidence>
<evidence type="ECO:0000269" key="10">
    <source>
    </source>
</evidence>
<evidence type="ECO:0000269" key="11">
    <source>
    </source>
</evidence>
<evidence type="ECO:0000269" key="12">
    <source>
    </source>
</evidence>
<evidence type="ECO:0000269" key="13">
    <source>
    </source>
</evidence>
<evidence type="ECO:0000269" key="14">
    <source>
    </source>
</evidence>
<evidence type="ECO:0000303" key="15">
    <source>
    </source>
</evidence>
<evidence type="ECO:0000305" key="16"/>
<evidence type="ECO:0007744" key="17">
    <source>
    </source>
</evidence>
<evidence type="ECO:0007744" key="18">
    <source>
    </source>
</evidence>
<feature type="chain" id="PRO_0000288504" description="TBC1 domain family member 24">
    <location>
        <begin position="1"/>
        <end position="559"/>
    </location>
</feature>
<feature type="domain" description="Rab-GAP TBC">
    <location>
        <begin position="47"/>
        <end position="262"/>
    </location>
</feature>
<feature type="domain" description="TLDc" evidence="2">
    <location>
        <begin position="343"/>
        <end position="554"/>
    </location>
</feature>
<feature type="binding site" evidence="1">
    <location>
        <position position="36"/>
    </location>
    <ligand>
        <name>a 1,2-diacyl-sn-glycero-3-phospho-(1D-myo-inositol)</name>
        <dbReference type="ChEBI" id="CHEBI:57880"/>
    </ligand>
</feature>
<feature type="binding site" evidence="1">
    <location>
        <position position="40"/>
    </location>
    <ligand>
        <name>a 1,2-diacyl-sn-glycero-3-phospho-(1D-myo-inositol)</name>
        <dbReference type="ChEBI" id="CHEBI:57880"/>
    </ligand>
</feature>
<feature type="binding site" evidence="1">
    <location>
        <position position="238"/>
    </location>
    <ligand>
        <name>a 1,2-diacyl-sn-glycero-3-phospho-(1D-myo-inositol)</name>
        <dbReference type="ChEBI" id="CHEBI:57880"/>
    </ligand>
</feature>
<feature type="binding site" evidence="1">
    <location>
        <position position="242"/>
    </location>
    <ligand>
        <name>a 1,2-diacyl-sn-glycero-3-phospho-(1D-myo-inositol)</name>
        <dbReference type="ChEBI" id="CHEBI:57880"/>
    </ligand>
</feature>
<feature type="binding site" evidence="1">
    <location>
        <begin position="293"/>
        <end position="297"/>
    </location>
    <ligand>
        <name>a 1,2-diacyl-sn-glycero-3-phospho-(1D-myo-inositol)</name>
        <dbReference type="ChEBI" id="CHEBI:57880"/>
    </ligand>
</feature>
<feature type="modified residue" description="Phosphoserine" evidence="18">
    <location>
        <position position="473"/>
    </location>
</feature>
<feature type="modified residue" description="Phosphoserine" evidence="17 18">
    <location>
        <position position="480"/>
    </location>
</feature>
<feature type="splice variant" id="VSP_025701" description="In isoform 2." evidence="15">
    <location>
        <begin position="322"/>
        <end position="327"/>
    </location>
</feature>
<feature type="sequence variant" id="VAR_070912" description="In DOORS; dbSNP:rs201257588." evidence="8">
    <original>Q</original>
    <variation>E</variation>
    <location>
        <position position="20"/>
    </location>
</feature>
<feature type="sequence variant" id="VAR_070913" description="In DOORS; dbSNP:rs398122966." evidence="8">
    <original>R</original>
    <variation>C</variation>
    <location>
        <position position="40"/>
    </location>
</feature>
<feature type="sequence variant" id="VAR_070994" description="In DFNB86; dbSNP:rs587777147." evidence="9">
    <original>D</original>
    <variation>Y</variation>
    <location>
        <position position="70"/>
    </location>
</feature>
<feature type="sequence variant" id="VAR_083253" description="In EPRPDC." evidence="13">
    <location>
        <begin position="81"/>
        <end position="84"/>
    </location>
</feature>
<feature type="sequence variant" id="VAR_070914" description="In DOORS; uncertain significance; dbSNP:rs747821285." evidence="8">
    <original>G</original>
    <variation>S</variation>
    <location>
        <position position="110"/>
    </location>
</feature>
<feature type="sequence variant" id="VAR_078184" description="In DEE16; dbSNP:rs770820144." evidence="12">
    <original>A</original>
    <variation>D</variation>
    <location>
        <position position="113"/>
    </location>
</feature>
<feature type="sequence variant" id="VAR_064365" description="In FIME; significantly impairs the interaction with ARF6; partially induces neurite overgrowth when overexpressed in primary cortical neurons; dbSNP:rs267607103." evidence="5">
    <original>D</original>
    <variation>H</variation>
    <location>
        <position position="147"/>
    </location>
</feature>
<feature type="sequence variant" id="VAR_078185" description="In DEE16; dbSNP:rs863223337." evidence="12">
    <original>L</original>
    <variation>P</variation>
    <location>
        <position position="159"/>
    </location>
</feature>
<feature type="sequence variant" id="VAR_072107" description="In DFNA65; dbSNP:rs483352866." evidence="10 11">
    <original>S</original>
    <variation>L</variation>
    <location>
        <position position="178"/>
    </location>
</feature>
<feature type="sequence variant" id="VAR_083254" description="In EPRPDC; uncertain significance; dbSNP:rs763670146." evidence="13">
    <original>T</original>
    <variation>M</variation>
    <location>
        <position position="182"/>
    </location>
</feature>
<feature type="sequence variant" id="VAR_070102" description="In DEE16; loss of function mutation; impairs the interaction with ARF6; overexpression of the mutant protein in primary cortical neurons abolishes the ability to increase neurite length and arborization; dbSNP:rs397514713." evidence="7">
    <original>F</original>
    <variation>S</variation>
    <location>
        <position position="229"/>
    </location>
</feature>
<feature type="sequence variant" id="VAR_070915" description="In DOORS; dbSNP:rs398122965." evidence="8">
    <original>R</original>
    <variation>C</variation>
    <location>
        <position position="242"/>
    </location>
</feature>
<feature type="sequence variant" id="VAR_064366" description="In FIME; fails to induce neurite overgrowth when overexpressed in primary cortical neurons; dbSNP:rs267607104." evidence="6">
    <original>F</original>
    <variation>L</variation>
    <location>
        <position position="251"/>
    </location>
</feature>
<feature type="sequence variant" id="VAR_070995" description="In DFNB86; dbSNP:rs199700840." evidence="9">
    <original>R</original>
    <variation>P</variation>
    <location>
        <position position="293"/>
    </location>
</feature>
<feature type="sequence variant" id="VAR_070890" description="In dbSNP:rs72768728." evidence="3 4">
    <original>F</original>
    <variation>L</variation>
    <location>
        <position position="295"/>
    </location>
</feature>
<feature type="sequence variant" id="VAR_070916" description="In DOORS; dbSNP:rs797044548." evidence="8">
    <original>L</original>
    <variation>F</variation>
    <location>
        <position position="333"/>
    </location>
</feature>
<feature type="sequence variant" id="VAR_083255" description="In EPRPDC; dbSNP:rs765965968." evidence="13">
    <original>R</original>
    <variation>H</variation>
    <location>
        <position position="360"/>
    </location>
</feature>
<feature type="sequence variant" id="VAR_089784" description="In DFNA65; uncertain significance." evidence="14">
    <original>H</original>
    <variation>Y</variation>
    <location>
        <position position="487"/>
    </location>
</feature>
<feature type="sequence variant" id="VAR_083256" description="In EPRPDC; dbSNP:rs564477999." evidence="13">
    <original>A</original>
    <variation>V</variation>
    <location>
        <position position="500"/>
    </location>
</feature>
<feature type="sequence variant" id="VAR_083257" description="In EPRPDC; results in synaptic vesicle trafficking defects when expressed in a heterologous system; does not affect localization to presynapse when expressed in a heterologous system; dbSNP:rs1596973014." evidence="13">
    <original>G</original>
    <variation>R</variation>
    <location>
        <position position="501"/>
    </location>
</feature>
<feature type="sequence variant" id="VAR_083258" description="In EPRPDC; uncertain significance; dbSNP:rs1251822607." evidence="13">
    <original>G</original>
    <variation>R</variation>
    <location>
        <position position="511"/>
    </location>
</feature>
<feature type="sequence variant" id="VAR_064367" description="In FIME; does not affect the interaction with ARF6; fails to induce neurite overgrowth when overexpressed in primary cortical neurons; dbSNP:rs267607105." evidence="5">
    <original>A</original>
    <variation>V</variation>
    <location>
        <position position="515"/>
    </location>
</feature>